<protein>
    <recommendedName>
        <fullName evidence="1">Phosphoribosylformylglycinamidine cyclo-ligase</fullName>
        <ecNumber evidence="1">6.3.3.1</ecNumber>
    </recommendedName>
    <alternativeName>
        <fullName evidence="1">AIR synthase</fullName>
    </alternativeName>
    <alternativeName>
        <fullName evidence="1">AIRS</fullName>
    </alternativeName>
    <alternativeName>
        <fullName evidence="1">Phosphoribosyl-aminoimidazole synthetase</fullName>
    </alternativeName>
</protein>
<reference key="1">
    <citation type="journal article" date="2008" name="Genome Res.">
        <title>Genome sequence of the beta-rhizobium Cupriavidus taiwanensis and comparative genomics of rhizobia.</title>
        <authorList>
            <person name="Amadou C."/>
            <person name="Pascal G."/>
            <person name="Mangenot S."/>
            <person name="Glew M."/>
            <person name="Bontemps C."/>
            <person name="Capela D."/>
            <person name="Carrere S."/>
            <person name="Cruveiller S."/>
            <person name="Dossat C."/>
            <person name="Lajus A."/>
            <person name="Marchetti M."/>
            <person name="Poinsot V."/>
            <person name="Rouy Z."/>
            <person name="Servin B."/>
            <person name="Saad M."/>
            <person name="Schenowitz C."/>
            <person name="Barbe V."/>
            <person name="Batut J."/>
            <person name="Medigue C."/>
            <person name="Masson-Boivin C."/>
        </authorList>
    </citation>
    <scope>NUCLEOTIDE SEQUENCE [LARGE SCALE GENOMIC DNA]</scope>
    <source>
        <strain>DSM 17343 / BCRC 17206 / CCUG 44338 / CIP 107171 / LMG 19424 / R1</strain>
    </source>
</reference>
<keyword id="KW-0067">ATP-binding</keyword>
<keyword id="KW-0963">Cytoplasm</keyword>
<keyword id="KW-0436">Ligase</keyword>
<keyword id="KW-0547">Nucleotide-binding</keyword>
<keyword id="KW-0658">Purine biosynthesis</keyword>
<dbReference type="EC" id="6.3.3.1" evidence="1"/>
<dbReference type="EMBL" id="CU633749">
    <property type="protein sequence ID" value="CAQ70483.1"/>
    <property type="molecule type" value="Genomic_DNA"/>
</dbReference>
<dbReference type="RefSeq" id="WP_012353779.1">
    <property type="nucleotide sequence ID" value="NC_010528.1"/>
</dbReference>
<dbReference type="SMR" id="B3R6D1"/>
<dbReference type="GeneID" id="29760238"/>
<dbReference type="KEGG" id="cti:RALTA_A2552"/>
<dbReference type="eggNOG" id="COG0150">
    <property type="taxonomic scope" value="Bacteria"/>
</dbReference>
<dbReference type="HOGENOM" id="CLU_047116_0_0_4"/>
<dbReference type="BioCyc" id="CTAI977880:RALTA_RS12410-MONOMER"/>
<dbReference type="UniPathway" id="UPA00074">
    <property type="reaction ID" value="UER00129"/>
</dbReference>
<dbReference type="Proteomes" id="UP000001692">
    <property type="component" value="Chromosome 1"/>
</dbReference>
<dbReference type="GO" id="GO:0005829">
    <property type="term" value="C:cytosol"/>
    <property type="evidence" value="ECO:0007669"/>
    <property type="project" value="TreeGrafter"/>
</dbReference>
<dbReference type="GO" id="GO:0005524">
    <property type="term" value="F:ATP binding"/>
    <property type="evidence" value="ECO:0007669"/>
    <property type="project" value="UniProtKB-KW"/>
</dbReference>
<dbReference type="GO" id="GO:0004637">
    <property type="term" value="F:phosphoribosylamine-glycine ligase activity"/>
    <property type="evidence" value="ECO:0007669"/>
    <property type="project" value="TreeGrafter"/>
</dbReference>
<dbReference type="GO" id="GO:0004641">
    <property type="term" value="F:phosphoribosylformylglycinamidine cyclo-ligase activity"/>
    <property type="evidence" value="ECO:0007669"/>
    <property type="project" value="UniProtKB-UniRule"/>
</dbReference>
<dbReference type="GO" id="GO:0006189">
    <property type="term" value="P:'de novo' IMP biosynthetic process"/>
    <property type="evidence" value="ECO:0007669"/>
    <property type="project" value="UniProtKB-UniRule"/>
</dbReference>
<dbReference type="GO" id="GO:0046084">
    <property type="term" value="P:adenine biosynthetic process"/>
    <property type="evidence" value="ECO:0007669"/>
    <property type="project" value="TreeGrafter"/>
</dbReference>
<dbReference type="CDD" id="cd02196">
    <property type="entry name" value="PurM"/>
    <property type="match status" value="1"/>
</dbReference>
<dbReference type="FunFam" id="3.30.1330.10:FF:000001">
    <property type="entry name" value="Phosphoribosylformylglycinamidine cyclo-ligase"/>
    <property type="match status" value="1"/>
</dbReference>
<dbReference type="FunFam" id="3.90.650.10:FF:000001">
    <property type="entry name" value="Phosphoribosylformylglycinamidine cyclo-ligase"/>
    <property type="match status" value="1"/>
</dbReference>
<dbReference type="Gene3D" id="3.90.650.10">
    <property type="entry name" value="PurM-like C-terminal domain"/>
    <property type="match status" value="1"/>
</dbReference>
<dbReference type="Gene3D" id="3.30.1330.10">
    <property type="entry name" value="PurM-like, N-terminal domain"/>
    <property type="match status" value="1"/>
</dbReference>
<dbReference type="HAMAP" id="MF_00741">
    <property type="entry name" value="AIRS"/>
    <property type="match status" value="1"/>
</dbReference>
<dbReference type="InterPro" id="IPR010918">
    <property type="entry name" value="PurM-like_C_dom"/>
</dbReference>
<dbReference type="InterPro" id="IPR036676">
    <property type="entry name" value="PurM-like_C_sf"/>
</dbReference>
<dbReference type="InterPro" id="IPR016188">
    <property type="entry name" value="PurM-like_N"/>
</dbReference>
<dbReference type="InterPro" id="IPR036921">
    <property type="entry name" value="PurM-like_N_sf"/>
</dbReference>
<dbReference type="InterPro" id="IPR004733">
    <property type="entry name" value="PurM_cligase"/>
</dbReference>
<dbReference type="NCBIfam" id="TIGR00878">
    <property type="entry name" value="purM"/>
    <property type="match status" value="1"/>
</dbReference>
<dbReference type="PANTHER" id="PTHR10520:SF12">
    <property type="entry name" value="TRIFUNCTIONAL PURINE BIOSYNTHETIC PROTEIN ADENOSINE-3"/>
    <property type="match status" value="1"/>
</dbReference>
<dbReference type="PANTHER" id="PTHR10520">
    <property type="entry name" value="TRIFUNCTIONAL PURINE BIOSYNTHETIC PROTEIN ADENOSINE-3-RELATED"/>
    <property type="match status" value="1"/>
</dbReference>
<dbReference type="Pfam" id="PF00586">
    <property type="entry name" value="AIRS"/>
    <property type="match status" value="1"/>
</dbReference>
<dbReference type="Pfam" id="PF02769">
    <property type="entry name" value="AIRS_C"/>
    <property type="match status" value="1"/>
</dbReference>
<dbReference type="SUPFAM" id="SSF56042">
    <property type="entry name" value="PurM C-terminal domain-like"/>
    <property type="match status" value="1"/>
</dbReference>
<dbReference type="SUPFAM" id="SSF55326">
    <property type="entry name" value="PurM N-terminal domain-like"/>
    <property type="match status" value="1"/>
</dbReference>
<gene>
    <name evidence="1" type="primary">purM</name>
    <name type="ordered locus">RALTA_A2552</name>
</gene>
<organism>
    <name type="scientific">Cupriavidus taiwanensis (strain DSM 17343 / BCRC 17206 / CCUG 44338 / CIP 107171 / LMG 19424 / R1)</name>
    <name type="common">Ralstonia taiwanensis (strain LMG 19424)</name>
    <dbReference type="NCBI Taxonomy" id="977880"/>
    <lineage>
        <taxon>Bacteria</taxon>
        <taxon>Pseudomonadati</taxon>
        <taxon>Pseudomonadota</taxon>
        <taxon>Betaproteobacteria</taxon>
        <taxon>Burkholderiales</taxon>
        <taxon>Burkholderiaceae</taxon>
        <taxon>Cupriavidus</taxon>
    </lineage>
</organism>
<name>PUR5_CUPTR</name>
<feature type="chain" id="PRO_1000193010" description="Phosphoribosylformylglycinamidine cyclo-ligase">
    <location>
        <begin position="1"/>
        <end position="350"/>
    </location>
</feature>
<evidence type="ECO:0000255" key="1">
    <source>
        <dbReference type="HAMAP-Rule" id="MF_00741"/>
    </source>
</evidence>
<proteinExistence type="inferred from homology"/>
<comment type="catalytic activity">
    <reaction evidence="1">
        <text>2-formamido-N(1)-(5-O-phospho-beta-D-ribosyl)acetamidine + ATP = 5-amino-1-(5-phospho-beta-D-ribosyl)imidazole + ADP + phosphate + H(+)</text>
        <dbReference type="Rhea" id="RHEA:23032"/>
        <dbReference type="ChEBI" id="CHEBI:15378"/>
        <dbReference type="ChEBI" id="CHEBI:30616"/>
        <dbReference type="ChEBI" id="CHEBI:43474"/>
        <dbReference type="ChEBI" id="CHEBI:137981"/>
        <dbReference type="ChEBI" id="CHEBI:147287"/>
        <dbReference type="ChEBI" id="CHEBI:456216"/>
        <dbReference type="EC" id="6.3.3.1"/>
    </reaction>
</comment>
<comment type="pathway">
    <text evidence="1">Purine metabolism; IMP biosynthesis via de novo pathway; 5-amino-1-(5-phospho-D-ribosyl)imidazole from N(2)-formyl-N(1)-(5-phospho-D-ribosyl)glycinamide: step 2/2.</text>
</comment>
<comment type="subcellular location">
    <subcellularLocation>
        <location evidence="1">Cytoplasm</location>
    </subcellularLocation>
</comment>
<comment type="similarity">
    <text evidence="1">Belongs to the AIR synthase family.</text>
</comment>
<sequence>MSASPTAGQAGLSYRDAGVDIDAGDALVDRIKPFAKRTMREGVMAGIGGFGALFELSKKYQEPVLVSGTDGVGTKLKLAFQLNRHDTVGQDLVAMSVNDILVQGAEPLFFLDYFACGKLDVDTAATVIQGIARGCELAGCALIGGETAEMPSMYPDGEYDLAGFAVGAVEKKKIIDGSTITPGDVVLGLASSGAHSNGYSLVRKIIEVAKPDLDADFHGQRLQDAIMAPTRIYVKPLLSLIETLPVKGMAHITGGGLTENVPRVLAQDVTAVLHRDAWTLPPLFQWLQAQGRVADDEMHRVFNCGIGMVVIVAKEDAERAIRHLQAAGEAVWQIGEIRERAEGEAQTIVI</sequence>
<accession>B3R6D1</accession>